<protein>
    <recommendedName>
        <fullName evidence="1">Small ribosomal subunit protein uS10</fullName>
    </recommendedName>
    <alternativeName>
        <fullName evidence="2">30S ribosomal protein S10</fullName>
    </alternativeName>
</protein>
<keyword id="KW-1185">Reference proteome</keyword>
<keyword id="KW-0687">Ribonucleoprotein</keyword>
<keyword id="KW-0689">Ribosomal protein</keyword>
<evidence type="ECO:0000255" key="1">
    <source>
        <dbReference type="HAMAP-Rule" id="MF_00508"/>
    </source>
</evidence>
<evidence type="ECO:0000305" key="2"/>
<reference key="1">
    <citation type="journal article" date="2005" name="Infect. Immun.">
        <title>Whole-genome analyses of speciation events in pathogenic Brucellae.</title>
        <authorList>
            <person name="Chain P.S."/>
            <person name="Comerci D.J."/>
            <person name="Tolmasky M.E."/>
            <person name="Larimer F.W."/>
            <person name="Malfatti S.A."/>
            <person name="Vergez L.M."/>
            <person name="Aguero F."/>
            <person name="Land M.L."/>
            <person name="Ugalde R.A."/>
            <person name="Garcia E."/>
        </authorList>
    </citation>
    <scope>NUCLEOTIDE SEQUENCE [LARGE SCALE GENOMIC DNA]</scope>
    <source>
        <strain>2308</strain>
    </source>
</reference>
<gene>
    <name evidence="1" type="primary">rpsJ</name>
    <name type="ordered locus">BAB1_1256</name>
</gene>
<proteinExistence type="inferred from homology"/>
<feature type="chain" id="PRO_0000237022" description="Small ribosomal subunit protein uS10">
    <location>
        <begin position="1"/>
        <end position="102"/>
    </location>
</feature>
<accession>Q2YM02</accession>
<comment type="function">
    <text evidence="1">Involved in the binding of tRNA to the ribosomes.</text>
</comment>
<comment type="subunit">
    <text evidence="1">Part of the 30S ribosomal subunit.</text>
</comment>
<comment type="similarity">
    <text evidence="1">Belongs to the universal ribosomal protein uS10 family.</text>
</comment>
<sequence>MNGQNIRIRLKAFDHRILDASTREIVSTAKRTGANVRGPIPLPTRIEKFTVNRSPHIDKKSREQFEMRTHKRLLDIVDPTPQTVDALMKLDLSAGVDVEIKL</sequence>
<name>RS10_BRUA2</name>
<organism>
    <name type="scientific">Brucella abortus (strain 2308)</name>
    <dbReference type="NCBI Taxonomy" id="359391"/>
    <lineage>
        <taxon>Bacteria</taxon>
        <taxon>Pseudomonadati</taxon>
        <taxon>Pseudomonadota</taxon>
        <taxon>Alphaproteobacteria</taxon>
        <taxon>Hyphomicrobiales</taxon>
        <taxon>Brucellaceae</taxon>
        <taxon>Brucella/Ochrobactrum group</taxon>
        <taxon>Brucella</taxon>
    </lineage>
</organism>
<dbReference type="EMBL" id="AM040264">
    <property type="protein sequence ID" value="CAJ11212.1"/>
    <property type="molecule type" value="Genomic_DNA"/>
</dbReference>
<dbReference type="RefSeq" id="WP_002964363.1">
    <property type="nucleotide sequence ID" value="NZ_KN046823.1"/>
</dbReference>
<dbReference type="SMR" id="Q2YM02"/>
<dbReference type="STRING" id="359391.BAB1_1256"/>
<dbReference type="GeneID" id="97533523"/>
<dbReference type="KEGG" id="bmf:BAB1_1256"/>
<dbReference type="PATRIC" id="fig|359391.11.peg.156"/>
<dbReference type="HOGENOM" id="CLU_122625_1_3_5"/>
<dbReference type="PhylomeDB" id="Q2YM02"/>
<dbReference type="Proteomes" id="UP000002719">
    <property type="component" value="Chromosome I"/>
</dbReference>
<dbReference type="GO" id="GO:1990904">
    <property type="term" value="C:ribonucleoprotein complex"/>
    <property type="evidence" value="ECO:0007669"/>
    <property type="project" value="UniProtKB-KW"/>
</dbReference>
<dbReference type="GO" id="GO:0005840">
    <property type="term" value="C:ribosome"/>
    <property type="evidence" value="ECO:0007669"/>
    <property type="project" value="UniProtKB-KW"/>
</dbReference>
<dbReference type="GO" id="GO:0003735">
    <property type="term" value="F:structural constituent of ribosome"/>
    <property type="evidence" value="ECO:0007669"/>
    <property type="project" value="InterPro"/>
</dbReference>
<dbReference type="GO" id="GO:0000049">
    <property type="term" value="F:tRNA binding"/>
    <property type="evidence" value="ECO:0007669"/>
    <property type="project" value="UniProtKB-UniRule"/>
</dbReference>
<dbReference type="GO" id="GO:0006412">
    <property type="term" value="P:translation"/>
    <property type="evidence" value="ECO:0007669"/>
    <property type="project" value="UniProtKB-UniRule"/>
</dbReference>
<dbReference type="FunFam" id="3.30.70.600:FF:000001">
    <property type="entry name" value="30S ribosomal protein S10"/>
    <property type="match status" value="1"/>
</dbReference>
<dbReference type="Gene3D" id="3.30.70.600">
    <property type="entry name" value="Ribosomal protein S10 domain"/>
    <property type="match status" value="1"/>
</dbReference>
<dbReference type="HAMAP" id="MF_00508">
    <property type="entry name" value="Ribosomal_uS10"/>
    <property type="match status" value="1"/>
</dbReference>
<dbReference type="InterPro" id="IPR001848">
    <property type="entry name" value="Ribosomal_uS10"/>
</dbReference>
<dbReference type="InterPro" id="IPR018268">
    <property type="entry name" value="Ribosomal_uS10_CS"/>
</dbReference>
<dbReference type="InterPro" id="IPR027486">
    <property type="entry name" value="Ribosomal_uS10_dom"/>
</dbReference>
<dbReference type="InterPro" id="IPR036838">
    <property type="entry name" value="Ribosomal_uS10_dom_sf"/>
</dbReference>
<dbReference type="NCBIfam" id="NF001861">
    <property type="entry name" value="PRK00596.1"/>
    <property type="match status" value="1"/>
</dbReference>
<dbReference type="NCBIfam" id="TIGR01049">
    <property type="entry name" value="rpsJ_bact"/>
    <property type="match status" value="1"/>
</dbReference>
<dbReference type="PANTHER" id="PTHR11700">
    <property type="entry name" value="30S RIBOSOMAL PROTEIN S10 FAMILY MEMBER"/>
    <property type="match status" value="1"/>
</dbReference>
<dbReference type="Pfam" id="PF00338">
    <property type="entry name" value="Ribosomal_S10"/>
    <property type="match status" value="1"/>
</dbReference>
<dbReference type="PRINTS" id="PR00971">
    <property type="entry name" value="RIBOSOMALS10"/>
</dbReference>
<dbReference type="SMART" id="SM01403">
    <property type="entry name" value="Ribosomal_S10"/>
    <property type="match status" value="1"/>
</dbReference>
<dbReference type="SUPFAM" id="SSF54999">
    <property type="entry name" value="Ribosomal protein S10"/>
    <property type="match status" value="1"/>
</dbReference>
<dbReference type="PROSITE" id="PS00361">
    <property type="entry name" value="RIBOSOMAL_S10"/>
    <property type="match status" value="1"/>
</dbReference>